<comment type="function">
    <text evidence="1">Required for the timely initiation of chromosomal replication via direct interactions with the DnaA initiator protein.</text>
</comment>
<comment type="subunit">
    <text evidence="1">Homotetramer; dimer of dimers.</text>
</comment>
<comment type="similarity">
    <text evidence="1">Belongs to the SIS family. DiaA subfamily.</text>
</comment>
<gene>
    <name evidence="1" type="primary">diaA</name>
    <name type="ordered locus">YPA_3752</name>
</gene>
<feature type="chain" id="PRO_1000065555" description="DnaA initiator-associating protein DiaA">
    <location>
        <begin position="1"/>
        <end position="196"/>
    </location>
</feature>
<feature type="domain" description="SIS" evidence="1">
    <location>
        <begin position="34"/>
        <end position="196"/>
    </location>
</feature>
<sequence length="196" mass="20938">MLERIKGCFTESIQTQIAAAEALPDAISCAAMALVQSLLNGNKILCCGNGTSAANAQHFAASMINRFETERPSLPAIALNADNVVLTAITNDRLHDEVYAKQVRALGQAGDVLLAISTRGNSRDIVKAVEAAVTRDMTIVALTGYDGGELAGLLGQLDVEIRIPSHRGARVQELHMLTVNCLCDLIDNTLFPHQND</sequence>
<organism>
    <name type="scientific">Yersinia pestis bv. Antiqua (strain Antiqua)</name>
    <dbReference type="NCBI Taxonomy" id="360102"/>
    <lineage>
        <taxon>Bacteria</taxon>
        <taxon>Pseudomonadati</taxon>
        <taxon>Pseudomonadota</taxon>
        <taxon>Gammaproteobacteria</taxon>
        <taxon>Enterobacterales</taxon>
        <taxon>Yersiniaceae</taxon>
        <taxon>Yersinia</taxon>
    </lineage>
</organism>
<name>DIAA_YERPA</name>
<accession>Q1C1F8</accession>
<protein>
    <recommendedName>
        <fullName evidence="1">DnaA initiator-associating protein DiaA</fullName>
    </recommendedName>
</protein>
<dbReference type="EMBL" id="CP000308">
    <property type="protein sequence ID" value="ABG15714.1"/>
    <property type="molecule type" value="Genomic_DNA"/>
</dbReference>
<dbReference type="RefSeq" id="WP_002210146.1">
    <property type="nucleotide sequence ID" value="NZ_CP009906.1"/>
</dbReference>
<dbReference type="SMR" id="Q1C1F8"/>
<dbReference type="GeneID" id="57975165"/>
<dbReference type="KEGG" id="ypa:YPA_3752"/>
<dbReference type="Proteomes" id="UP000001971">
    <property type="component" value="Chromosome"/>
</dbReference>
<dbReference type="GO" id="GO:0097367">
    <property type="term" value="F:carbohydrate derivative binding"/>
    <property type="evidence" value="ECO:0007669"/>
    <property type="project" value="InterPro"/>
</dbReference>
<dbReference type="GO" id="GO:1901135">
    <property type="term" value="P:carbohydrate derivative metabolic process"/>
    <property type="evidence" value="ECO:0007669"/>
    <property type="project" value="InterPro"/>
</dbReference>
<dbReference type="GO" id="GO:0006260">
    <property type="term" value="P:DNA replication"/>
    <property type="evidence" value="ECO:0007669"/>
    <property type="project" value="UniProtKB-UniRule"/>
</dbReference>
<dbReference type="CDD" id="cd05006">
    <property type="entry name" value="SIS_GmhA"/>
    <property type="match status" value="1"/>
</dbReference>
<dbReference type="FunFam" id="3.40.50.10490:FF:000006">
    <property type="entry name" value="DnaA initiator-associating protein DiaA"/>
    <property type="match status" value="1"/>
</dbReference>
<dbReference type="Gene3D" id="3.40.50.10490">
    <property type="entry name" value="Glucose-6-phosphate isomerase like protein, domain 1"/>
    <property type="match status" value="1"/>
</dbReference>
<dbReference type="HAMAP" id="MF_01157">
    <property type="entry name" value="SIS_DiaA"/>
    <property type="match status" value="1"/>
</dbReference>
<dbReference type="InterPro" id="IPR023070">
    <property type="entry name" value="DiaA"/>
</dbReference>
<dbReference type="InterPro" id="IPR035461">
    <property type="entry name" value="GmhA/DiaA"/>
</dbReference>
<dbReference type="InterPro" id="IPR001347">
    <property type="entry name" value="SIS_dom"/>
</dbReference>
<dbReference type="InterPro" id="IPR046348">
    <property type="entry name" value="SIS_dom_sf"/>
</dbReference>
<dbReference type="InterPro" id="IPR050099">
    <property type="entry name" value="SIS_GmhA/DiaA_subfam"/>
</dbReference>
<dbReference type="NCBIfam" id="NF008138">
    <property type="entry name" value="PRK10886.1"/>
    <property type="match status" value="1"/>
</dbReference>
<dbReference type="PANTHER" id="PTHR30390:SF6">
    <property type="entry name" value="DNAA INITIATOR-ASSOCIATING PROTEIN DIAA"/>
    <property type="match status" value="1"/>
</dbReference>
<dbReference type="PANTHER" id="PTHR30390">
    <property type="entry name" value="SEDOHEPTULOSE 7-PHOSPHATE ISOMERASE / DNAA INITIATOR-ASSOCIATING FACTOR FOR REPLICATION INITIATION"/>
    <property type="match status" value="1"/>
</dbReference>
<dbReference type="Pfam" id="PF13580">
    <property type="entry name" value="SIS_2"/>
    <property type="match status" value="1"/>
</dbReference>
<dbReference type="SUPFAM" id="SSF53697">
    <property type="entry name" value="SIS domain"/>
    <property type="match status" value="1"/>
</dbReference>
<dbReference type="PROSITE" id="PS51464">
    <property type="entry name" value="SIS"/>
    <property type="match status" value="1"/>
</dbReference>
<evidence type="ECO:0000255" key="1">
    <source>
        <dbReference type="HAMAP-Rule" id="MF_01157"/>
    </source>
</evidence>
<reference key="1">
    <citation type="journal article" date="2006" name="J. Bacteriol.">
        <title>Complete genome sequence of Yersinia pestis strains Antiqua and Nepal516: evidence of gene reduction in an emerging pathogen.</title>
        <authorList>
            <person name="Chain P.S.G."/>
            <person name="Hu P."/>
            <person name="Malfatti S.A."/>
            <person name="Radnedge L."/>
            <person name="Larimer F."/>
            <person name="Vergez L.M."/>
            <person name="Worsham P."/>
            <person name="Chu M.C."/>
            <person name="Andersen G.L."/>
        </authorList>
    </citation>
    <scope>NUCLEOTIDE SEQUENCE [LARGE SCALE GENOMIC DNA]</scope>
    <source>
        <strain>Antiqua</strain>
    </source>
</reference>
<proteinExistence type="inferred from homology"/>
<keyword id="KW-0235">DNA replication</keyword>